<evidence type="ECO:0000255" key="1">
    <source>
        <dbReference type="HAMAP-Rule" id="MF_00173"/>
    </source>
</evidence>
<protein>
    <recommendedName>
        <fullName evidence="1">Arginine repressor</fullName>
    </recommendedName>
</protein>
<proteinExistence type="inferred from homology"/>
<comment type="function">
    <text evidence="1">Regulates arginine biosynthesis genes.</text>
</comment>
<comment type="pathway">
    <text>Amino-acid biosynthesis; L-arginine biosynthesis [regulation].</text>
</comment>
<comment type="subcellular location">
    <subcellularLocation>
        <location evidence="1">Cytoplasm</location>
    </subcellularLocation>
</comment>
<comment type="similarity">
    <text evidence="1">Belongs to the ArgR family.</text>
</comment>
<keyword id="KW-0028">Amino-acid biosynthesis</keyword>
<keyword id="KW-0055">Arginine biosynthesis</keyword>
<keyword id="KW-0963">Cytoplasm</keyword>
<keyword id="KW-0238">DNA-binding</keyword>
<keyword id="KW-1185">Reference proteome</keyword>
<keyword id="KW-0678">Repressor</keyword>
<keyword id="KW-0804">Transcription</keyword>
<keyword id="KW-0805">Transcription regulation</keyword>
<dbReference type="EMBL" id="CP001114">
    <property type="protein sequence ID" value="ACO44958.1"/>
    <property type="molecule type" value="Genomic_DNA"/>
</dbReference>
<dbReference type="RefSeq" id="WP_012692081.1">
    <property type="nucleotide sequence ID" value="NC_012526.1"/>
</dbReference>
<dbReference type="SMR" id="C1CYD7"/>
<dbReference type="STRING" id="546414.Deide_01490"/>
<dbReference type="PaxDb" id="546414-Deide_01490"/>
<dbReference type="KEGG" id="ddr:Deide_01490"/>
<dbReference type="eggNOG" id="COG1438">
    <property type="taxonomic scope" value="Bacteria"/>
</dbReference>
<dbReference type="HOGENOM" id="CLU_097103_3_0_0"/>
<dbReference type="OrthoDB" id="9807089at2"/>
<dbReference type="UniPathway" id="UPA00068"/>
<dbReference type="Proteomes" id="UP000002208">
    <property type="component" value="Chromosome"/>
</dbReference>
<dbReference type="GO" id="GO:0005737">
    <property type="term" value="C:cytoplasm"/>
    <property type="evidence" value="ECO:0007669"/>
    <property type="project" value="UniProtKB-SubCell"/>
</dbReference>
<dbReference type="GO" id="GO:0034618">
    <property type="term" value="F:arginine binding"/>
    <property type="evidence" value="ECO:0007669"/>
    <property type="project" value="InterPro"/>
</dbReference>
<dbReference type="GO" id="GO:0003677">
    <property type="term" value="F:DNA binding"/>
    <property type="evidence" value="ECO:0007669"/>
    <property type="project" value="UniProtKB-KW"/>
</dbReference>
<dbReference type="GO" id="GO:0003700">
    <property type="term" value="F:DNA-binding transcription factor activity"/>
    <property type="evidence" value="ECO:0007669"/>
    <property type="project" value="UniProtKB-UniRule"/>
</dbReference>
<dbReference type="GO" id="GO:0006526">
    <property type="term" value="P:L-arginine biosynthetic process"/>
    <property type="evidence" value="ECO:0007669"/>
    <property type="project" value="UniProtKB-UniPathway"/>
</dbReference>
<dbReference type="GO" id="GO:0051259">
    <property type="term" value="P:protein complex oligomerization"/>
    <property type="evidence" value="ECO:0007669"/>
    <property type="project" value="InterPro"/>
</dbReference>
<dbReference type="GO" id="GO:1900079">
    <property type="term" value="P:regulation of arginine biosynthetic process"/>
    <property type="evidence" value="ECO:0007669"/>
    <property type="project" value="UniProtKB-UniRule"/>
</dbReference>
<dbReference type="Gene3D" id="3.30.1360.40">
    <property type="match status" value="1"/>
</dbReference>
<dbReference type="Gene3D" id="1.10.10.10">
    <property type="entry name" value="Winged helix-like DNA-binding domain superfamily/Winged helix DNA-binding domain"/>
    <property type="match status" value="1"/>
</dbReference>
<dbReference type="HAMAP" id="MF_00173">
    <property type="entry name" value="Arg_repressor"/>
    <property type="match status" value="1"/>
</dbReference>
<dbReference type="InterPro" id="IPR001669">
    <property type="entry name" value="Arg_repress"/>
</dbReference>
<dbReference type="InterPro" id="IPR020899">
    <property type="entry name" value="Arg_repress_C"/>
</dbReference>
<dbReference type="InterPro" id="IPR036251">
    <property type="entry name" value="Arg_repress_C_sf"/>
</dbReference>
<dbReference type="InterPro" id="IPR020900">
    <property type="entry name" value="Arg_repress_DNA-bd"/>
</dbReference>
<dbReference type="InterPro" id="IPR036388">
    <property type="entry name" value="WH-like_DNA-bd_sf"/>
</dbReference>
<dbReference type="InterPro" id="IPR036390">
    <property type="entry name" value="WH_DNA-bd_sf"/>
</dbReference>
<dbReference type="NCBIfam" id="TIGR01529">
    <property type="entry name" value="argR_whole"/>
    <property type="match status" value="1"/>
</dbReference>
<dbReference type="PANTHER" id="PTHR34471">
    <property type="entry name" value="ARGININE REPRESSOR"/>
    <property type="match status" value="1"/>
</dbReference>
<dbReference type="PANTHER" id="PTHR34471:SF1">
    <property type="entry name" value="ARGININE REPRESSOR"/>
    <property type="match status" value="1"/>
</dbReference>
<dbReference type="Pfam" id="PF01316">
    <property type="entry name" value="Arg_repressor"/>
    <property type="match status" value="1"/>
</dbReference>
<dbReference type="Pfam" id="PF02863">
    <property type="entry name" value="Arg_repressor_C"/>
    <property type="match status" value="1"/>
</dbReference>
<dbReference type="PRINTS" id="PR01467">
    <property type="entry name" value="ARGREPRESSOR"/>
</dbReference>
<dbReference type="SUPFAM" id="SSF55252">
    <property type="entry name" value="C-terminal domain of arginine repressor"/>
    <property type="match status" value="1"/>
</dbReference>
<dbReference type="SUPFAM" id="SSF46785">
    <property type="entry name" value="Winged helix' DNA-binding domain"/>
    <property type="match status" value="1"/>
</dbReference>
<name>ARGR_DEIDV</name>
<feature type="chain" id="PRO_1000203712" description="Arginine repressor">
    <location>
        <begin position="1"/>
        <end position="157"/>
    </location>
</feature>
<organism>
    <name type="scientific">Deinococcus deserti (strain DSM 17065 / CIP 109153 / LMG 22923 / VCD115)</name>
    <dbReference type="NCBI Taxonomy" id="546414"/>
    <lineage>
        <taxon>Bacteria</taxon>
        <taxon>Thermotogati</taxon>
        <taxon>Deinococcota</taxon>
        <taxon>Deinococci</taxon>
        <taxon>Deinococcales</taxon>
        <taxon>Deinococcaceae</taxon>
        <taxon>Deinococcus</taxon>
    </lineage>
</organism>
<sequence length="157" mass="17759">MVSKELSKEQRQKRIQDIIARESISTQGELVQRLRADNIQVTQATISRDINELRLVRLPIGKGRHRYALAQMTGHTDVEEELGRLFQNFVHDVDRGENMLVIRTADGHATGVALLLDRLRRDDIVGTLAGEDTIFVVARTTLEAESLMEEFHALMLG</sequence>
<accession>C1CYD7</accession>
<reference key="1">
    <citation type="journal article" date="2009" name="PLoS Genet.">
        <title>Alliance of proteomics and genomics to unravel the specificities of Sahara bacterium Deinococcus deserti.</title>
        <authorList>
            <person name="de Groot A."/>
            <person name="Dulermo R."/>
            <person name="Ortet P."/>
            <person name="Blanchard L."/>
            <person name="Guerin P."/>
            <person name="Fernandez B."/>
            <person name="Vacherie B."/>
            <person name="Dossat C."/>
            <person name="Jolivet E."/>
            <person name="Siguier P."/>
            <person name="Chandler M."/>
            <person name="Barakat M."/>
            <person name="Dedieu A."/>
            <person name="Barbe V."/>
            <person name="Heulin T."/>
            <person name="Sommer S."/>
            <person name="Achouak W."/>
            <person name="Armengaud J."/>
        </authorList>
    </citation>
    <scope>NUCLEOTIDE SEQUENCE [LARGE SCALE GENOMIC DNA]</scope>
    <source>
        <strain>DSM 17065 / CIP 109153 / LMG 22923 / VCD115</strain>
    </source>
</reference>
<gene>
    <name evidence="1" type="primary">argR</name>
    <name type="ordered locus">Deide_01490</name>
</gene>